<sequence length="779" mass="87551">MVEYTAEFTAEEQALIDKEFARLGESTYLDHAGTTLYAESQVLSAAQQLQRDVICNPHTCRATGDYVDQVRYRILEFFNTNADDYHVVFTANATAALRLVADHFDFAGDGNFHYCQENHTSVLGMRQLVKAKGIYMLTKDDIELNVLDQPSTPAPAAAATAQANSLVTFSAQCNFSGYKMPLTVIEQIQKRGLQQLGKCIWSAESQPAAKNVDSNYYVCLDAAAFAASSPLDLQRFRPDFVCVSFYKIFGYPTGVGGLLVSRRGAEVLRKRFYGGGTINYAYPHTMEHQLRNVFHERFEDGTLPFLSIVELLQGFRTLERLVPGRSIERISRHVHGLARYCEHQLKQLKHPNGAPLITLYNHAGYEDRAKQGGTVAFNVRTNTGDYVGFGEVACMAALHRILLRTGCFCNVGACQHFLQLNDETMDAIYKRAGRICGDYFDLLDGQPTGAVRVSFGYMTRIQDVDRFLQMLRNSYLVIAKPQQRFSFIEQQAELLPKALQQRAQRLRPRLLQLAIYPVKSCAAFKIDSSTGSWPLTKQGLQYDREWMIVDMNGMALTQKRCTDLCLIQPRIVGDQLELHYAETSCSMPLSLSVQAANSARCHSKVCRQAIEGYDCGDEVATWLSQSLGLEGVRLLRQSAQRSAPGTQQQQLSLVNQAQFLLVNRASVRSLQFEESLDETVDRFRANIIIDTGTPFEELTYTQLRIGDILFQVDGPCQRCDMICINQRTGERSPETLTTIARMQSGKMRFGIYISRLPSETDDRLEQQQQLTCGDVIVVS</sequence>
<name>MOCOS_DROMO</name>
<gene>
    <name evidence="3" type="primary">mal</name>
    <name type="ORF">GI15478</name>
</gene>
<keyword id="KW-0501">Molybdenum cofactor biosynthesis</keyword>
<keyword id="KW-0597">Phosphoprotein</keyword>
<keyword id="KW-0663">Pyridoxal phosphate</keyword>
<keyword id="KW-1185">Reference proteome</keyword>
<keyword id="KW-0808">Transferase</keyword>
<organism>
    <name type="scientific">Drosophila mojavensis</name>
    <name type="common">Fruit fly</name>
    <dbReference type="NCBI Taxonomy" id="7230"/>
    <lineage>
        <taxon>Eukaryota</taxon>
        <taxon>Metazoa</taxon>
        <taxon>Ecdysozoa</taxon>
        <taxon>Arthropoda</taxon>
        <taxon>Hexapoda</taxon>
        <taxon>Insecta</taxon>
        <taxon>Pterygota</taxon>
        <taxon>Neoptera</taxon>
        <taxon>Endopterygota</taxon>
        <taxon>Diptera</taxon>
        <taxon>Brachycera</taxon>
        <taxon>Muscomorpha</taxon>
        <taxon>Ephydroidea</taxon>
        <taxon>Drosophilidae</taxon>
        <taxon>Drosophila</taxon>
    </lineage>
</organism>
<accession>B4L340</accession>
<feature type="chain" id="PRO_0000369373" description="Molybdenum cofactor sulfurase">
    <location>
        <begin position="1"/>
        <end position="779"/>
    </location>
</feature>
<feature type="domain" description="MOSC" evidence="3">
    <location>
        <begin position="624"/>
        <end position="779"/>
    </location>
</feature>
<feature type="active site" evidence="3">
    <location>
        <position position="409"/>
    </location>
</feature>
<feature type="modified residue" description="N6-(pyridoxal phosphate)lysine" evidence="3">
    <location>
        <position position="247"/>
    </location>
</feature>
<feature type="modified residue" description="Phosphoserine" evidence="1">
    <location>
        <position position="732"/>
    </location>
</feature>
<protein>
    <recommendedName>
        <fullName evidence="3">Molybdenum cofactor sulfurase</fullName>
        <shortName evidence="3">MCS</shortName>
        <shortName evidence="3">MOS</shortName>
        <shortName evidence="3">MoCo sulfurase</shortName>
        <ecNumber evidence="3">2.8.1.9</ecNumber>
    </recommendedName>
    <alternativeName>
        <fullName evidence="3">Molybdenum cofactor sulfurtransferase</fullName>
    </alternativeName>
    <alternativeName>
        <fullName evidence="3">Protein maroon-like</fullName>
        <shortName evidence="3">Ma-l</shortName>
    </alternativeName>
</protein>
<comment type="function">
    <text evidence="3">Sulfurates the molybdenum cofactor. Sulfation of molybdenum is essential for xanthine dehydrogenase (XDH) and aldehyde oxidase (ADO) enzymes in which molybdenum cofactor is liganded by 1 oxygen and 1 sulfur atom in active form.</text>
</comment>
<comment type="catalytic activity">
    <reaction evidence="3">
        <text>Mo-molybdopterin + L-cysteine + AH2 = thio-Mo-molybdopterin + L-alanine + A + H2O</text>
        <dbReference type="Rhea" id="RHEA:42636"/>
        <dbReference type="ChEBI" id="CHEBI:13193"/>
        <dbReference type="ChEBI" id="CHEBI:15377"/>
        <dbReference type="ChEBI" id="CHEBI:17499"/>
        <dbReference type="ChEBI" id="CHEBI:35235"/>
        <dbReference type="ChEBI" id="CHEBI:57972"/>
        <dbReference type="ChEBI" id="CHEBI:71302"/>
        <dbReference type="ChEBI" id="CHEBI:82685"/>
        <dbReference type="EC" id="2.8.1.9"/>
    </reaction>
</comment>
<comment type="cofactor">
    <cofactor evidence="3">
        <name>pyridoxal 5'-phosphate</name>
        <dbReference type="ChEBI" id="CHEBI:597326"/>
    </cofactor>
</comment>
<comment type="pathway">
    <text evidence="2">Cofactor biosynthesis; molybdopterin biosynthesis.</text>
</comment>
<comment type="similarity">
    <text evidence="3">Belongs to the class-V pyridoxal-phosphate-dependent aminotransferase family. MOCOS subfamily.</text>
</comment>
<reference key="1">
    <citation type="journal article" date="2007" name="Nature">
        <title>Evolution of genes and genomes on the Drosophila phylogeny.</title>
        <authorList>
            <consortium name="Drosophila 12 genomes consortium"/>
        </authorList>
    </citation>
    <scope>NUCLEOTIDE SEQUENCE [LARGE SCALE GENOMIC DNA]</scope>
    <source>
        <strain>Tucson 15081-1352.22</strain>
    </source>
</reference>
<proteinExistence type="inferred from homology"/>
<dbReference type="EC" id="2.8.1.9" evidence="3"/>
<dbReference type="EMBL" id="CH933810">
    <property type="protein sequence ID" value="EDW06968.1"/>
    <property type="molecule type" value="Genomic_DNA"/>
</dbReference>
<dbReference type="SMR" id="B4L340"/>
<dbReference type="FunCoup" id="B4L340">
    <property type="interactions" value="160"/>
</dbReference>
<dbReference type="EnsemblMetazoa" id="FBtr0166203">
    <property type="protein sequence ID" value="FBpp0164695"/>
    <property type="gene ID" value="FBgn0138227"/>
</dbReference>
<dbReference type="EnsemblMetazoa" id="XM_002009615.4">
    <property type="protein sequence ID" value="XP_002009651.1"/>
    <property type="gene ID" value="LOC6583991"/>
</dbReference>
<dbReference type="GeneID" id="6583991"/>
<dbReference type="KEGG" id="dmo:Dmoj_GI15478"/>
<dbReference type="CTD" id="4118"/>
<dbReference type="eggNOG" id="KOG2142">
    <property type="taxonomic scope" value="Eukaryota"/>
</dbReference>
<dbReference type="HOGENOM" id="CLU_010913_0_1_1"/>
<dbReference type="InParanoid" id="B4L340"/>
<dbReference type="OMA" id="PCTRCQM"/>
<dbReference type="OrthoDB" id="420046at2759"/>
<dbReference type="PhylomeDB" id="B4L340"/>
<dbReference type="UniPathway" id="UPA00344"/>
<dbReference type="Proteomes" id="UP000009192">
    <property type="component" value="Unassembled WGS sequence"/>
</dbReference>
<dbReference type="GO" id="GO:0016829">
    <property type="term" value="F:lyase activity"/>
    <property type="evidence" value="ECO:0007669"/>
    <property type="project" value="UniProtKB-UniRule"/>
</dbReference>
<dbReference type="GO" id="GO:0008265">
    <property type="term" value="F:molybdenum cofactor sulfurtransferase activity"/>
    <property type="evidence" value="ECO:0000250"/>
    <property type="project" value="UniProtKB"/>
</dbReference>
<dbReference type="GO" id="GO:0030151">
    <property type="term" value="F:molybdenum ion binding"/>
    <property type="evidence" value="ECO:0007669"/>
    <property type="project" value="UniProtKB-UniRule"/>
</dbReference>
<dbReference type="GO" id="GO:0030170">
    <property type="term" value="F:pyridoxal phosphate binding"/>
    <property type="evidence" value="ECO:0007669"/>
    <property type="project" value="UniProtKB-UniRule"/>
</dbReference>
<dbReference type="GO" id="GO:0006777">
    <property type="term" value="P:Mo-molybdopterin cofactor biosynthetic process"/>
    <property type="evidence" value="ECO:0007669"/>
    <property type="project" value="UniProtKB-UniRule"/>
</dbReference>
<dbReference type="GO" id="GO:0043545">
    <property type="term" value="P:molybdopterin cofactor metabolic process"/>
    <property type="evidence" value="ECO:0000250"/>
    <property type="project" value="UniProtKB"/>
</dbReference>
<dbReference type="FunFam" id="3.40.640.10:FF:000119">
    <property type="entry name" value="Molybdenum cofactor sulfurase"/>
    <property type="match status" value="1"/>
</dbReference>
<dbReference type="FunFam" id="3.90.1150.10:FF:000079">
    <property type="entry name" value="Molybdenum cofactor sulfurase"/>
    <property type="match status" value="1"/>
</dbReference>
<dbReference type="Gene3D" id="3.90.1150.10">
    <property type="entry name" value="Aspartate Aminotransferase, domain 1"/>
    <property type="match status" value="1"/>
</dbReference>
<dbReference type="Gene3D" id="3.40.640.10">
    <property type="entry name" value="Type I PLP-dependent aspartate aminotransferase-like (Major domain)"/>
    <property type="match status" value="1"/>
</dbReference>
<dbReference type="HAMAP" id="MF_03050">
    <property type="entry name" value="MOCOS"/>
    <property type="match status" value="1"/>
</dbReference>
<dbReference type="InterPro" id="IPR000192">
    <property type="entry name" value="Aminotrans_V_dom"/>
</dbReference>
<dbReference type="InterPro" id="IPR005302">
    <property type="entry name" value="MoCF_Sase_C"/>
</dbReference>
<dbReference type="InterPro" id="IPR028886">
    <property type="entry name" value="MoCo_sulfurase"/>
</dbReference>
<dbReference type="InterPro" id="IPR005303">
    <property type="entry name" value="MOCOS_middle"/>
</dbReference>
<dbReference type="InterPro" id="IPR015424">
    <property type="entry name" value="PyrdxlP-dep_Trfase"/>
</dbReference>
<dbReference type="InterPro" id="IPR015421">
    <property type="entry name" value="PyrdxlP-dep_Trfase_major"/>
</dbReference>
<dbReference type="InterPro" id="IPR015422">
    <property type="entry name" value="PyrdxlP-dep_Trfase_small"/>
</dbReference>
<dbReference type="InterPro" id="IPR011037">
    <property type="entry name" value="Pyrv_Knase-like_insert_dom_sf"/>
</dbReference>
<dbReference type="PANTHER" id="PTHR14237:SF19">
    <property type="entry name" value="MITOCHONDRIAL AMIDOXIME REDUCING COMPONENT 1"/>
    <property type="match status" value="1"/>
</dbReference>
<dbReference type="PANTHER" id="PTHR14237">
    <property type="entry name" value="MOLYBDOPTERIN COFACTOR SULFURASE MOSC"/>
    <property type="match status" value="1"/>
</dbReference>
<dbReference type="Pfam" id="PF00266">
    <property type="entry name" value="Aminotran_5"/>
    <property type="match status" value="1"/>
</dbReference>
<dbReference type="Pfam" id="PF03473">
    <property type="entry name" value="MOSC"/>
    <property type="match status" value="1"/>
</dbReference>
<dbReference type="Pfam" id="PF03476">
    <property type="entry name" value="MOSC_N"/>
    <property type="match status" value="1"/>
</dbReference>
<dbReference type="SUPFAM" id="SSF141673">
    <property type="entry name" value="MOSC N-terminal domain-like"/>
    <property type="match status" value="1"/>
</dbReference>
<dbReference type="SUPFAM" id="SSF50800">
    <property type="entry name" value="PK beta-barrel domain-like"/>
    <property type="match status" value="1"/>
</dbReference>
<dbReference type="SUPFAM" id="SSF53383">
    <property type="entry name" value="PLP-dependent transferases"/>
    <property type="match status" value="1"/>
</dbReference>
<dbReference type="PROSITE" id="PS51340">
    <property type="entry name" value="MOSC"/>
    <property type="match status" value="1"/>
</dbReference>
<evidence type="ECO:0000250" key="1"/>
<evidence type="ECO:0000250" key="2">
    <source>
        <dbReference type="UniProtKB" id="Q96EN8"/>
    </source>
</evidence>
<evidence type="ECO:0000255" key="3">
    <source>
        <dbReference type="HAMAP-Rule" id="MF_03050"/>
    </source>
</evidence>